<reference key="1">
    <citation type="journal article" date="2009" name="Environ. Microbiol.">
        <title>Genome sequence of Desulfobacterium autotrophicum HRM2, a marine sulfate reducer oxidizing organic carbon completely to carbon dioxide.</title>
        <authorList>
            <person name="Strittmatter A.W."/>
            <person name="Liesegang H."/>
            <person name="Rabus R."/>
            <person name="Decker I."/>
            <person name="Amann J."/>
            <person name="Andres S."/>
            <person name="Henne A."/>
            <person name="Fricke W.F."/>
            <person name="Martinez-Arias R."/>
            <person name="Bartels D."/>
            <person name="Goesmann A."/>
            <person name="Krause L."/>
            <person name="Puehler A."/>
            <person name="Klenk H.P."/>
            <person name="Richter M."/>
            <person name="Schuler M."/>
            <person name="Gloeckner F.O."/>
            <person name="Meyerdierks A."/>
            <person name="Gottschalk G."/>
            <person name="Amann R."/>
        </authorList>
    </citation>
    <scope>NUCLEOTIDE SEQUENCE [LARGE SCALE GENOMIC DNA]</scope>
    <source>
        <strain>ATCC 43914 / DSM 3382 / VKM B-1955 / HRM2</strain>
    </source>
</reference>
<feature type="chain" id="PRO_1000203487" description="Pantothenate synthetase">
    <location>
        <begin position="1"/>
        <end position="283"/>
    </location>
</feature>
<feature type="active site" description="Proton donor" evidence="1">
    <location>
        <position position="37"/>
    </location>
</feature>
<feature type="binding site" evidence="1">
    <location>
        <begin position="30"/>
        <end position="37"/>
    </location>
    <ligand>
        <name>ATP</name>
        <dbReference type="ChEBI" id="CHEBI:30616"/>
    </ligand>
</feature>
<feature type="binding site" evidence="1">
    <location>
        <position position="61"/>
    </location>
    <ligand>
        <name>(R)-pantoate</name>
        <dbReference type="ChEBI" id="CHEBI:15980"/>
    </ligand>
</feature>
<feature type="binding site" evidence="1">
    <location>
        <position position="61"/>
    </location>
    <ligand>
        <name>beta-alanine</name>
        <dbReference type="ChEBI" id="CHEBI:57966"/>
    </ligand>
</feature>
<feature type="binding site" evidence="1">
    <location>
        <begin position="147"/>
        <end position="150"/>
    </location>
    <ligand>
        <name>ATP</name>
        <dbReference type="ChEBI" id="CHEBI:30616"/>
    </ligand>
</feature>
<feature type="binding site" evidence="1">
    <location>
        <position position="153"/>
    </location>
    <ligand>
        <name>(R)-pantoate</name>
        <dbReference type="ChEBI" id="CHEBI:15980"/>
    </ligand>
</feature>
<feature type="binding site" evidence="1">
    <location>
        <position position="176"/>
    </location>
    <ligand>
        <name>ATP</name>
        <dbReference type="ChEBI" id="CHEBI:30616"/>
    </ligand>
</feature>
<feature type="binding site" evidence="1">
    <location>
        <begin position="184"/>
        <end position="187"/>
    </location>
    <ligand>
        <name>ATP</name>
        <dbReference type="ChEBI" id="CHEBI:30616"/>
    </ligand>
</feature>
<organism>
    <name type="scientific">Desulforapulum autotrophicum (strain ATCC 43914 / DSM 3382 / VKM B-1955 / HRM2)</name>
    <name type="common">Desulfobacterium autotrophicum</name>
    <dbReference type="NCBI Taxonomy" id="177437"/>
    <lineage>
        <taxon>Bacteria</taxon>
        <taxon>Pseudomonadati</taxon>
        <taxon>Thermodesulfobacteriota</taxon>
        <taxon>Desulfobacteria</taxon>
        <taxon>Desulfobacterales</taxon>
        <taxon>Desulfobacteraceae</taxon>
        <taxon>Desulforapulum</taxon>
    </lineage>
</organism>
<dbReference type="EC" id="6.3.2.1" evidence="1"/>
<dbReference type="EMBL" id="CP001087">
    <property type="protein sequence ID" value="ACN13591.1"/>
    <property type="molecule type" value="Genomic_DNA"/>
</dbReference>
<dbReference type="RefSeq" id="WP_012662840.1">
    <property type="nucleotide sequence ID" value="NC_012108.1"/>
</dbReference>
<dbReference type="SMR" id="C0QHN3"/>
<dbReference type="STRING" id="177437.HRM2_04770"/>
<dbReference type="KEGG" id="dat:HRM2_04770"/>
<dbReference type="eggNOG" id="COG0414">
    <property type="taxonomic scope" value="Bacteria"/>
</dbReference>
<dbReference type="HOGENOM" id="CLU_047148_0_0_7"/>
<dbReference type="OrthoDB" id="9773087at2"/>
<dbReference type="UniPathway" id="UPA00028">
    <property type="reaction ID" value="UER00005"/>
</dbReference>
<dbReference type="Proteomes" id="UP000000442">
    <property type="component" value="Chromosome"/>
</dbReference>
<dbReference type="GO" id="GO:0005829">
    <property type="term" value="C:cytosol"/>
    <property type="evidence" value="ECO:0007669"/>
    <property type="project" value="TreeGrafter"/>
</dbReference>
<dbReference type="GO" id="GO:0005524">
    <property type="term" value="F:ATP binding"/>
    <property type="evidence" value="ECO:0007669"/>
    <property type="project" value="UniProtKB-KW"/>
</dbReference>
<dbReference type="GO" id="GO:0004592">
    <property type="term" value="F:pantoate-beta-alanine ligase activity"/>
    <property type="evidence" value="ECO:0007669"/>
    <property type="project" value="UniProtKB-UniRule"/>
</dbReference>
<dbReference type="GO" id="GO:0015940">
    <property type="term" value="P:pantothenate biosynthetic process"/>
    <property type="evidence" value="ECO:0007669"/>
    <property type="project" value="UniProtKB-UniRule"/>
</dbReference>
<dbReference type="CDD" id="cd00560">
    <property type="entry name" value="PanC"/>
    <property type="match status" value="1"/>
</dbReference>
<dbReference type="FunFam" id="3.30.1300.10:FF:000001">
    <property type="entry name" value="Pantothenate synthetase"/>
    <property type="match status" value="1"/>
</dbReference>
<dbReference type="FunFam" id="3.40.50.620:FF:000013">
    <property type="entry name" value="Pantothenate synthetase"/>
    <property type="match status" value="1"/>
</dbReference>
<dbReference type="Gene3D" id="3.40.50.620">
    <property type="entry name" value="HUPs"/>
    <property type="match status" value="1"/>
</dbReference>
<dbReference type="Gene3D" id="3.30.1300.10">
    <property type="entry name" value="Pantoate-beta-alanine ligase, C-terminal domain"/>
    <property type="match status" value="1"/>
</dbReference>
<dbReference type="HAMAP" id="MF_00158">
    <property type="entry name" value="PanC"/>
    <property type="match status" value="1"/>
</dbReference>
<dbReference type="InterPro" id="IPR003721">
    <property type="entry name" value="Pantoate_ligase"/>
</dbReference>
<dbReference type="InterPro" id="IPR042176">
    <property type="entry name" value="Pantoate_ligase_C"/>
</dbReference>
<dbReference type="InterPro" id="IPR014729">
    <property type="entry name" value="Rossmann-like_a/b/a_fold"/>
</dbReference>
<dbReference type="NCBIfam" id="TIGR00018">
    <property type="entry name" value="panC"/>
    <property type="match status" value="1"/>
</dbReference>
<dbReference type="PANTHER" id="PTHR21299">
    <property type="entry name" value="CYTIDYLATE KINASE/PANTOATE-BETA-ALANINE LIGASE"/>
    <property type="match status" value="1"/>
</dbReference>
<dbReference type="PANTHER" id="PTHR21299:SF1">
    <property type="entry name" value="PANTOATE--BETA-ALANINE LIGASE"/>
    <property type="match status" value="1"/>
</dbReference>
<dbReference type="Pfam" id="PF02569">
    <property type="entry name" value="Pantoate_ligase"/>
    <property type="match status" value="1"/>
</dbReference>
<dbReference type="SUPFAM" id="SSF52374">
    <property type="entry name" value="Nucleotidylyl transferase"/>
    <property type="match status" value="1"/>
</dbReference>
<accession>C0QHN3</accession>
<evidence type="ECO:0000255" key="1">
    <source>
        <dbReference type="HAMAP-Rule" id="MF_00158"/>
    </source>
</evidence>
<keyword id="KW-0067">ATP-binding</keyword>
<keyword id="KW-0963">Cytoplasm</keyword>
<keyword id="KW-0436">Ligase</keyword>
<keyword id="KW-0547">Nucleotide-binding</keyword>
<keyword id="KW-0566">Pantothenate biosynthesis</keyword>
<keyword id="KW-1185">Reference proteome</keyword>
<name>PANC_DESAH</name>
<comment type="function">
    <text evidence="1">Catalyzes the condensation of pantoate with beta-alanine in an ATP-dependent reaction via a pantoyl-adenylate intermediate.</text>
</comment>
<comment type="catalytic activity">
    <reaction evidence="1">
        <text>(R)-pantoate + beta-alanine + ATP = (R)-pantothenate + AMP + diphosphate + H(+)</text>
        <dbReference type="Rhea" id="RHEA:10912"/>
        <dbReference type="ChEBI" id="CHEBI:15378"/>
        <dbReference type="ChEBI" id="CHEBI:15980"/>
        <dbReference type="ChEBI" id="CHEBI:29032"/>
        <dbReference type="ChEBI" id="CHEBI:30616"/>
        <dbReference type="ChEBI" id="CHEBI:33019"/>
        <dbReference type="ChEBI" id="CHEBI:57966"/>
        <dbReference type="ChEBI" id="CHEBI:456215"/>
        <dbReference type="EC" id="6.3.2.1"/>
    </reaction>
</comment>
<comment type="pathway">
    <text evidence="1">Cofactor biosynthesis; (R)-pantothenate biosynthesis; (R)-pantothenate from (R)-pantoate and beta-alanine: step 1/1.</text>
</comment>
<comment type="subunit">
    <text evidence="1">Homodimer.</text>
</comment>
<comment type="subcellular location">
    <subcellularLocation>
        <location evidence="1">Cytoplasm</location>
    </subcellularLocation>
</comment>
<comment type="miscellaneous">
    <text evidence="1">The reaction proceeds by a bi uni uni bi ping pong mechanism.</text>
</comment>
<comment type="similarity">
    <text evidence="1">Belongs to the pantothenate synthetase family.</text>
</comment>
<protein>
    <recommendedName>
        <fullName evidence="1">Pantothenate synthetase</fullName>
        <shortName evidence="1">PS</shortName>
        <ecNumber evidence="1">6.3.2.1</ecNumber>
    </recommendedName>
    <alternativeName>
        <fullName evidence="1">Pantoate--beta-alanine ligase</fullName>
    </alternativeName>
    <alternativeName>
        <fullName evidence="1">Pantoate-activating enzyme</fullName>
    </alternativeName>
</protein>
<proteinExistence type="inferred from homology"/>
<gene>
    <name evidence="1" type="primary">panC</name>
    <name type="ordered locus">HRM2_04770</name>
</gene>
<sequence>MDIIKTTGQMQQWSERVRKQGKTICLVPTMGYFHDGHLSLMDAGRTQADHLVVSLFVNPIQFGANEDLDAYPTDHDRDFKLAELKGAAVVFAPGPEELYPPGFQTAVTLSQLPLHLCGLSRPVHFQGVATVVTKLFNIVGPDVAVFGSKDFQQLQVIRRLVKDLNFNIRIMGCPIVREADGLAMSSRNLYLSADERNSALSLSCSLALAAEMVQAGETRCRPIIAAVEKFILGHQGTQVDYVCLCDPLTLEAVDTITSPVLLALAVQVGTTRLIDNQVIDPEQ</sequence>